<accession>A6VLM2</accession>
<name>ARAA_ACTSZ</name>
<evidence type="ECO:0000255" key="1">
    <source>
        <dbReference type="HAMAP-Rule" id="MF_00519"/>
    </source>
</evidence>
<protein>
    <recommendedName>
        <fullName evidence="1">L-arabinose isomerase</fullName>
        <ecNumber evidence="1">5.3.1.4</ecNumber>
    </recommendedName>
</protein>
<reference key="1">
    <citation type="journal article" date="2010" name="BMC Genomics">
        <title>A genomic perspective on the potential of Actinobacillus succinogenes for industrial succinate production.</title>
        <authorList>
            <person name="McKinlay J.B."/>
            <person name="Laivenieks M."/>
            <person name="Schindler B.D."/>
            <person name="McKinlay A.A."/>
            <person name="Siddaramappa S."/>
            <person name="Challacombe J.F."/>
            <person name="Lowry S.R."/>
            <person name="Clum A."/>
            <person name="Lapidus A.L."/>
            <person name="Burkhart K.B."/>
            <person name="Harkins V."/>
            <person name="Vieille C."/>
        </authorList>
    </citation>
    <scope>NUCLEOTIDE SEQUENCE [LARGE SCALE GENOMIC DNA]</scope>
    <source>
        <strain>ATCC 55618 / DSM 22257 / CCUG 43843 / 130Z</strain>
    </source>
</reference>
<keyword id="KW-0054">Arabinose catabolism</keyword>
<keyword id="KW-0119">Carbohydrate metabolism</keyword>
<keyword id="KW-0413">Isomerase</keyword>
<keyword id="KW-0464">Manganese</keyword>
<keyword id="KW-0479">Metal-binding</keyword>
<keyword id="KW-1185">Reference proteome</keyword>
<comment type="function">
    <text evidence="1">Catalyzes the conversion of L-arabinose to L-ribulose.</text>
</comment>
<comment type="catalytic activity">
    <reaction evidence="1">
        <text>beta-L-arabinopyranose = L-ribulose</text>
        <dbReference type="Rhea" id="RHEA:14821"/>
        <dbReference type="ChEBI" id="CHEBI:16880"/>
        <dbReference type="ChEBI" id="CHEBI:40886"/>
        <dbReference type="EC" id="5.3.1.4"/>
    </reaction>
</comment>
<comment type="cofactor">
    <cofactor evidence="1">
        <name>Mn(2+)</name>
        <dbReference type="ChEBI" id="CHEBI:29035"/>
    </cofactor>
    <text evidence="1">Binds 1 Mn(2+) ion per subunit.</text>
</comment>
<comment type="pathway">
    <text evidence="1">Carbohydrate degradation; L-arabinose degradation via L-ribulose; D-xylulose 5-phosphate from L-arabinose (bacterial route): step 1/3.</text>
</comment>
<comment type="similarity">
    <text evidence="1">Belongs to the arabinose isomerase family.</text>
</comment>
<organism>
    <name type="scientific">Actinobacillus succinogenes (strain ATCC 55618 / DSM 22257 / CCUG 43843 / 130Z)</name>
    <dbReference type="NCBI Taxonomy" id="339671"/>
    <lineage>
        <taxon>Bacteria</taxon>
        <taxon>Pseudomonadati</taxon>
        <taxon>Pseudomonadota</taxon>
        <taxon>Gammaproteobacteria</taxon>
        <taxon>Pasteurellales</taxon>
        <taxon>Pasteurellaceae</taxon>
        <taxon>Actinobacillus</taxon>
    </lineage>
</organism>
<dbReference type="EC" id="5.3.1.4" evidence="1"/>
<dbReference type="EMBL" id="CP000746">
    <property type="protein sequence ID" value="ABR73869.1"/>
    <property type="molecule type" value="Genomic_DNA"/>
</dbReference>
<dbReference type="RefSeq" id="WP_012072249.1">
    <property type="nucleotide sequence ID" value="NC_009655.1"/>
</dbReference>
<dbReference type="SMR" id="A6VLM2"/>
<dbReference type="STRING" id="339671.Asuc_0494"/>
<dbReference type="KEGG" id="asu:Asuc_0494"/>
<dbReference type="eggNOG" id="COG2160">
    <property type="taxonomic scope" value="Bacteria"/>
</dbReference>
<dbReference type="HOGENOM" id="CLU_045663_0_0_6"/>
<dbReference type="OrthoDB" id="9765600at2"/>
<dbReference type="UniPathway" id="UPA00145">
    <property type="reaction ID" value="UER00565"/>
</dbReference>
<dbReference type="Proteomes" id="UP000001114">
    <property type="component" value="Chromosome"/>
</dbReference>
<dbReference type="GO" id="GO:0005829">
    <property type="term" value="C:cytosol"/>
    <property type="evidence" value="ECO:0007669"/>
    <property type="project" value="TreeGrafter"/>
</dbReference>
<dbReference type="GO" id="GO:0008733">
    <property type="term" value="F:L-arabinose isomerase activity"/>
    <property type="evidence" value="ECO:0007669"/>
    <property type="project" value="UniProtKB-UniRule"/>
</dbReference>
<dbReference type="GO" id="GO:0030145">
    <property type="term" value="F:manganese ion binding"/>
    <property type="evidence" value="ECO:0007669"/>
    <property type="project" value="UniProtKB-UniRule"/>
</dbReference>
<dbReference type="GO" id="GO:0019569">
    <property type="term" value="P:L-arabinose catabolic process to xylulose 5-phosphate"/>
    <property type="evidence" value="ECO:0007669"/>
    <property type="project" value="UniProtKB-UniRule"/>
</dbReference>
<dbReference type="CDD" id="cd03557">
    <property type="entry name" value="L-arabinose_isomerase"/>
    <property type="match status" value="1"/>
</dbReference>
<dbReference type="Gene3D" id="3.40.50.10940">
    <property type="match status" value="1"/>
</dbReference>
<dbReference type="HAMAP" id="MF_00519">
    <property type="entry name" value="Arabinose_Isome"/>
    <property type="match status" value="1"/>
</dbReference>
<dbReference type="InterPro" id="IPR024664">
    <property type="entry name" value="Ara_Isoase_C"/>
</dbReference>
<dbReference type="InterPro" id="IPR055390">
    <property type="entry name" value="AraA_central"/>
</dbReference>
<dbReference type="InterPro" id="IPR055389">
    <property type="entry name" value="AraA_N"/>
</dbReference>
<dbReference type="InterPro" id="IPR038583">
    <property type="entry name" value="AraA_N_sf"/>
</dbReference>
<dbReference type="InterPro" id="IPR004216">
    <property type="entry name" value="Fuc/Ara_isomerase_C"/>
</dbReference>
<dbReference type="InterPro" id="IPR009015">
    <property type="entry name" value="Fucose_isomerase_N/cen_sf"/>
</dbReference>
<dbReference type="InterPro" id="IPR003762">
    <property type="entry name" value="Lara_isomerase"/>
</dbReference>
<dbReference type="NCBIfam" id="NF002795">
    <property type="entry name" value="PRK02929.1"/>
    <property type="match status" value="1"/>
</dbReference>
<dbReference type="PANTHER" id="PTHR38464">
    <property type="entry name" value="L-ARABINOSE ISOMERASE"/>
    <property type="match status" value="1"/>
</dbReference>
<dbReference type="PANTHER" id="PTHR38464:SF1">
    <property type="entry name" value="L-ARABINOSE ISOMERASE"/>
    <property type="match status" value="1"/>
</dbReference>
<dbReference type="Pfam" id="PF24856">
    <property type="entry name" value="AraA_central"/>
    <property type="match status" value="1"/>
</dbReference>
<dbReference type="Pfam" id="PF02610">
    <property type="entry name" value="AraA_N"/>
    <property type="match status" value="1"/>
</dbReference>
<dbReference type="Pfam" id="PF11762">
    <property type="entry name" value="Arabinose_Iso_C"/>
    <property type="match status" value="1"/>
</dbReference>
<dbReference type="PIRSF" id="PIRSF001478">
    <property type="entry name" value="L-ara_isomerase"/>
    <property type="match status" value="1"/>
</dbReference>
<dbReference type="SUPFAM" id="SSF50443">
    <property type="entry name" value="FucI/AraA C-terminal domain-like"/>
    <property type="match status" value="1"/>
</dbReference>
<dbReference type="SUPFAM" id="SSF53743">
    <property type="entry name" value="FucI/AraA N-terminal and middle domains"/>
    <property type="match status" value="1"/>
</dbReference>
<gene>
    <name evidence="1" type="primary">araA</name>
    <name type="ordered locus">Asuc_0494</name>
</gene>
<proteinExistence type="inferred from homology"/>
<feature type="chain" id="PRO_1000072489" description="L-arabinose isomerase">
    <location>
        <begin position="1"/>
        <end position="495"/>
    </location>
</feature>
<feature type="binding site" evidence="1">
    <location>
        <position position="305"/>
    </location>
    <ligand>
        <name>Mn(2+)</name>
        <dbReference type="ChEBI" id="CHEBI:29035"/>
    </ligand>
</feature>
<feature type="binding site" evidence="1">
    <location>
        <position position="332"/>
    </location>
    <ligand>
        <name>Mn(2+)</name>
        <dbReference type="ChEBI" id="CHEBI:29035"/>
    </ligand>
</feature>
<feature type="binding site" evidence="1">
    <location>
        <position position="349"/>
    </location>
    <ligand>
        <name>Mn(2+)</name>
        <dbReference type="ChEBI" id="CHEBI:29035"/>
    </ligand>
</feature>
<feature type="binding site" evidence="1">
    <location>
        <position position="448"/>
    </location>
    <ligand>
        <name>Mn(2+)</name>
        <dbReference type="ChEBI" id="CHEBI:29035"/>
    </ligand>
</feature>
<sequence>MEFIKKLEVWFIVGSQDLYGDEALKQVYANAKQITQYLNSRNPFIQIKLKPLATTPEDILAICRAANYEENCAGVIAWMHTFSPAKMWIAGLTRLDKPLLQFHTQFNKYIPWNEIDMDYMNLHQTAHGDREFGFMVSRLRKPRTIVVGHWQSESVKQKLDRWMRVLAAIYDQQHLKVARFGDNMREVAVTEGDKVEAQIKFGYSVNGYGIYQLVNSINAIKEEDIATLVKEYEADYQLVDSLKEGGEKRQSLIDSARIELGLKAFLDKGGFKAFTDTFQNLYGMKQLPGLPVQRLMAQGYGFGAEGDWKTAALVRAIKVMSYGLPNGCSFMEDYTYNLEDHNEVVLAAHMLEVCPSIAEDKPILDIKPLGIGGKEDPTRLIFTSKAGCATASTIVDLGNRFRMITAELQAIAKPQDMPNLPVGHAFWKLEPDFDTGTQAWILAGGAHHNVFSLDIDADMLRTFAEYFGIEFIHIHAKTELADLKNELRWNDVAYK</sequence>